<organism>
    <name type="scientific">Candida albicans (strain SC5314 / ATCC MYA-2876)</name>
    <name type="common">Yeast</name>
    <dbReference type="NCBI Taxonomy" id="237561"/>
    <lineage>
        <taxon>Eukaryota</taxon>
        <taxon>Fungi</taxon>
        <taxon>Dikarya</taxon>
        <taxon>Ascomycota</taxon>
        <taxon>Saccharomycotina</taxon>
        <taxon>Pichiomycetes</taxon>
        <taxon>Debaryomycetaceae</taxon>
        <taxon>Candida/Lodderomyces clade</taxon>
        <taxon>Candida</taxon>
    </lineage>
</organism>
<proteinExistence type="inferred from homology"/>
<protein>
    <recommendedName>
        <fullName>Glycosylphosphatidylinositol anchor biosynthesis protein 11</fullName>
    </recommendedName>
</protein>
<reference key="1">
    <citation type="journal article" date="2004" name="Proc. Natl. Acad. Sci. U.S.A.">
        <title>The diploid genome sequence of Candida albicans.</title>
        <authorList>
            <person name="Jones T."/>
            <person name="Federspiel N.A."/>
            <person name="Chibana H."/>
            <person name="Dungan J."/>
            <person name="Kalman S."/>
            <person name="Magee B.B."/>
            <person name="Newport G."/>
            <person name="Thorstenson Y.R."/>
            <person name="Agabian N."/>
            <person name="Magee P.T."/>
            <person name="Davis R.W."/>
            <person name="Scherer S."/>
        </authorList>
    </citation>
    <scope>NUCLEOTIDE SEQUENCE [LARGE SCALE GENOMIC DNA]</scope>
    <source>
        <strain>SC5314 / ATCC MYA-2876</strain>
    </source>
</reference>
<reference key="2">
    <citation type="journal article" date="2007" name="Genome Biol.">
        <title>Assembly of the Candida albicans genome into sixteen supercontigs aligned on the eight chromosomes.</title>
        <authorList>
            <person name="van het Hoog M."/>
            <person name="Rast T.J."/>
            <person name="Martchenko M."/>
            <person name="Grindle S."/>
            <person name="Dignard D."/>
            <person name="Hogues H."/>
            <person name="Cuomo C."/>
            <person name="Berriman M."/>
            <person name="Scherer S."/>
            <person name="Magee B.B."/>
            <person name="Whiteway M."/>
            <person name="Chibana H."/>
            <person name="Nantel A."/>
            <person name="Magee P.T."/>
        </authorList>
    </citation>
    <scope>GENOME REANNOTATION</scope>
    <source>
        <strain>SC5314 / ATCC MYA-2876</strain>
    </source>
</reference>
<reference key="3">
    <citation type="journal article" date="2013" name="Genome Biol.">
        <title>Assembly of a phased diploid Candida albicans genome facilitates allele-specific measurements and provides a simple model for repeat and indel structure.</title>
        <authorList>
            <person name="Muzzey D."/>
            <person name="Schwartz K."/>
            <person name="Weissman J.S."/>
            <person name="Sherlock G."/>
        </authorList>
    </citation>
    <scope>NUCLEOTIDE SEQUENCE [LARGE SCALE GENOMIC DNA]</scope>
    <scope>GENOME REANNOTATION</scope>
    <source>
        <strain>SC5314 / ATCC MYA-2876</strain>
    </source>
</reference>
<evidence type="ECO:0000250" key="1"/>
<evidence type="ECO:0000255" key="2"/>
<evidence type="ECO:0000305" key="3"/>
<comment type="function">
    <text evidence="1">Acts in the GPI biosynthetic pathway between GlcNAc-PI synthesis and GPI transfer to protein.</text>
</comment>
<comment type="pathway">
    <text>Glycolipid biosynthesis; glycosylphosphatidylinositol-anchor biosynthesis.</text>
</comment>
<comment type="subcellular location">
    <subcellularLocation>
        <location evidence="1">Endoplasmic reticulum membrane</location>
        <topology evidence="1">Multi-pass membrane protein</topology>
    </subcellularLocation>
</comment>
<comment type="similarity">
    <text evidence="3">Belongs to the PIGF family.</text>
</comment>
<keyword id="KW-0256">Endoplasmic reticulum</keyword>
<keyword id="KW-0325">Glycoprotein</keyword>
<keyword id="KW-0337">GPI-anchor biosynthesis</keyword>
<keyword id="KW-0472">Membrane</keyword>
<keyword id="KW-1185">Reference proteome</keyword>
<keyword id="KW-0812">Transmembrane</keyword>
<keyword id="KW-1133">Transmembrane helix</keyword>
<name>GPI11_CANAL</name>
<feature type="chain" id="PRO_0000191763" description="Glycosylphosphatidylinositol anchor biosynthesis protein 11">
    <location>
        <begin position="1"/>
        <end position="265"/>
    </location>
</feature>
<feature type="transmembrane region" description="Helical" evidence="2">
    <location>
        <begin position="49"/>
        <end position="69"/>
    </location>
</feature>
<feature type="transmembrane region" description="Helical" evidence="2">
    <location>
        <begin position="79"/>
        <end position="99"/>
    </location>
</feature>
<feature type="transmembrane region" description="Helical" evidence="2">
    <location>
        <begin position="137"/>
        <end position="157"/>
    </location>
</feature>
<feature type="transmembrane region" description="Helical" evidence="2">
    <location>
        <begin position="166"/>
        <end position="186"/>
    </location>
</feature>
<feature type="transmembrane region" description="Helical" evidence="2">
    <location>
        <begin position="209"/>
        <end position="229"/>
    </location>
</feature>
<feature type="transmembrane region" description="Helical" evidence="2">
    <location>
        <begin position="240"/>
        <end position="260"/>
    </location>
</feature>
<feature type="glycosylation site" description="N-linked (GlcNAc...) asparagine" evidence="2">
    <location>
        <position position="111"/>
    </location>
</feature>
<feature type="glycosylation site" description="N-linked (GlcNAc...) asparagine" evidence="2">
    <location>
        <position position="112"/>
    </location>
</feature>
<sequence length="265" mass="29810">MPAAIRPMKKTVSFSKDVSNNNNNLESDSDTKQSPQSYLTFIPQIKNSLLVVPFHNIFILVGMFYSGLTQDLETVMWKGFLTSIPIQVIYNYIIYINLLPLKKSTRNDHQNNSSGSAINNNNNNNNNNVPLLIGSSIFVSIVLSLPLFVVIILMGAPVYKYSLKTLYLSLHLSQLIFNPLIILSNLNVNKIKRLFKQDHLYRIIFHHGILSSVLLTLGGCWLGVIPIPLDWDRPWQQWPITLLVGGYLGGVVGGVLSLIVNYFSH</sequence>
<accession>Q5AFT2</accession>
<accession>A0A1D8PLI7</accession>
<accession>Q5AF45</accession>
<dbReference type="EMBL" id="CP017626">
    <property type="protein sequence ID" value="AOW29011.1"/>
    <property type="molecule type" value="Genomic_DNA"/>
</dbReference>
<dbReference type="RefSeq" id="XP_720511.1">
    <property type="nucleotide sequence ID" value="XM_715418.1"/>
</dbReference>
<dbReference type="FunCoup" id="Q5AFT2">
    <property type="interactions" value="157"/>
</dbReference>
<dbReference type="STRING" id="237561.Q5AFT2"/>
<dbReference type="GlyCosmos" id="Q5AFT2">
    <property type="glycosylation" value="2 sites, No reported glycans"/>
</dbReference>
<dbReference type="EnsemblFungi" id="C4_02420C_A-T">
    <property type="protein sequence ID" value="C4_02420C_A-T-p1"/>
    <property type="gene ID" value="C4_02420C_A"/>
</dbReference>
<dbReference type="GeneID" id="3637849"/>
<dbReference type="KEGG" id="cal:CAALFM_C402420CA"/>
<dbReference type="CGD" id="CAL0000185478">
    <property type="gene designation" value="orf19.10277"/>
</dbReference>
<dbReference type="VEuPathDB" id="FungiDB:C4_02420C_A"/>
<dbReference type="eggNOG" id="KOG3144">
    <property type="taxonomic scope" value="Eukaryota"/>
</dbReference>
<dbReference type="HOGENOM" id="CLU_069429_2_0_1"/>
<dbReference type="InParanoid" id="Q5AFT2"/>
<dbReference type="OrthoDB" id="17366at2759"/>
<dbReference type="UniPathway" id="UPA00196"/>
<dbReference type="PRO" id="PR:Q5AFT2"/>
<dbReference type="Proteomes" id="UP000000559">
    <property type="component" value="Chromosome 4"/>
</dbReference>
<dbReference type="GO" id="GO:0005789">
    <property type="term" value="C:endoplasmic reticulum membrane"/>
    <property type="evidence" value="ECO:0007669"/>
    <property type="project" value="UniProtKB-SubCell"/>
</dbReference>
<dbReference type="GO" id="GO:0030447">
    <property type="term" value="P:filamentous growth"/>
    <property type="evidence" value="ECO:0000315"/>
    <property type="project" value="CGD"/>
</dbReference>
<dbReference type="GO" id="GO:0006506">
    <property type="term" value="P:GPI anchor biosynthetic process"/>
    <property type="evidence" value="ECO:0007669"/>
    <property type="project" value="UniProtKB-UniPathway"/>
</dbReference>
<dbReference type="InterPro" id="IPR009580">
    <property type="entry name" value="GPI_biosynthesis_protein_Pig-F"/>
</dbReference>
<dbReference type="Pfam" id="PF06699">
    <property type="entry name" value="PIG-F"/>
    <property type="match status" value="1"/>
</dbReference>
<gene>
    <name type="primary">GPI11</name>
    <name type="ordered locus">CAALFM_C402420CA</name>
    <name type="ORF">CaO19.10277</name>
    <name type="ORF">CaO19.2761</name>
</gene>